<feature type="chain" id="PRO_0000128238" description="Pantothenate synthetase">
    <location>
        <begin position="1"/>
        <end position="285"/>
    </location>
</feature>
<feature type="active site" description="Proton donor" evidence="1">
    <location>
        <position position="37"/>
    </location>
</feature>
<feature type="binding site" evidence="1">
    <location>
        <begin position="30"/>
        <end position="37"/>
    </location>
    <ligand>
        <name>ATP</name>
        <dbReference type="ChEBI" id="CHEBI:30616"/>
    </ligand>
</feature>
<feature type="binding site" evidence="1">
    <location>
        <position position="61"/>
    </location>
    <ligand>
        <name>(R)-pantoate</name>
        <dbReference type="ChEBI" id="CHEBI:15980"/>
    </ligand>
</feature>
<feature type="binding site" evidence="1">
    <location>
        <position position="61"/>
    </location>
    <ligand>
        <name>beta-alanine</name>
        <dbReference type="ChEBI" id="CHEBI:57966"/>
    </ligand>
</feature>
<feature type="binding site" evidence="1">
    <location>
        <begin position="147"/>
        <end position="150"/>
    </location>
    <ligand>
        <name>ATP</name>
        <dbReference type="ChEBI" id="CHEBI:30616"/>
    </ligand>
</feature>
<feature type="binding site" evidence="1">
    <location>
        <position position="153"/>
    </location>
    <ligand>
        <name>(R)-pantoate</name>
        <dbReference type="ChEBI" id="CHEBI:15980"/>
    </ligand>
</feature>
<feature type="binding site" evidence="1">
    <location>
        <position position="176"/>
    </location>
    <ligand>
        <name>ATP</name>
        <dbReference type="ChEBI" id="CHEBI:30616"/>
    </ligand>
</feature>
<feature type="binding site" evidence="1">
    <location>
        <begin position="184"/>
        <end position="187"/>
    </location>
    <ligand>
        <name>ATP</name>
        <dbReference type="ChEBI" id="CHEBI:30616"/>
    </ligand>
</feature>
<protein>
    <recommendedName>
        <fullName evidence="1">Pantothenate synthetase</fullName>
        <shortName evidence="1">PS</shortName>
        <ecNumber evidence="1">6.3.2.1</ecNumber>
    </recommendedName>
    <alternativeName>
        <fullName evidence="1">Pantoate--beta-alanine ligase</fullName>
    </alternativeName>
    <alternativeName>
        <fullName evidence="1">Pantoate-activating enzyme</fullName>
    </alternativeName>
</protein>
<sequence length="285" mass="32064">MLIIRNRQELKEAILKQKKANKTIGFVPTMGFLHEGHMTLVSHARKETDFVVMSVFVNPTQFGPNEDFDAYPRDEAHDAKLAEEGGVDILFVPTVEEIYPTELATKLHVIKRVSVLDGADREGHFDGVVTVLTKLFHLVNPDNAYFGQKDAQQVAVVSGLVEDYFFPVNLRIIPTVREADGLAKSSRNVYLTETERKEAPVIHAALQLGRQLIDSGETDEAKIVQVMTDKINEQTSHEKIAYLALYSYPEFTPVTDWTKGIIIAAAVKYSKARLIDNELINVKRR</sequence>
<name>PANC_LISIN</name>
<reference key="1">
    <citation type="journal article" date="2001" name="Science">
        <title>Comparative genomics of Listeria species.</title>
        <authorList>
            <person name="Glaser P."/>
            <person name="Frangeul L."/>
            <person name="Buchrieser C."/>
            <person name="Rusniok C."/>
            <person name="Amend A."/>
            <person name="Baquero F."/>
            <person name="Berche P."/>
            <person name="Bloecker H."/>
            <person name="Brandt P."/>
            <person name="Chakraborty T."/>
            <person name="Charbit A."/>
            <person name="Chetouani F."/>
            <person name="Couve E."/>
            <person name="de Daruvar A."/>
            <person name="Dehoux P."/>
            <person name="Domann E."/>
            <person name="Dominguez-Bernal G."/>
            <person name="Duchaud E."/>
            <person name="Durant L."/>
            <person name="Dussurget O."/>
            <person name="Entian K.-D."/>
            <person name="Fsihi H."/>
            <person name="Garcia-del Portillo F."/>
            <person name="Garrido P."/>
            <person name="Gautier L."/>
            <person name="Goebel W."/>
            <person name="Gomez-Lopez N."/>
            <person name="Hain T."/>
            <person name="Hauf J."/>
            <person name="Jackson D."/>
            <person name="Jones L.-M."/>
            <person name="Kaerst U."/>
            <person name="Kreft J."/>
            <person name="Kuhn M."/>
            <person name="Kunst F."/>
            <person name="Kurapkat G."/>
            <person name="Madueno E."/>
            <person name="Maitournam A."/>
            <person name="Mata Vicente J."/>
            <person name="Ng E."/>
            <person name="Nedjari H."/>
            <person name="Nordsiek G."/>
            <person name="Novella S."/>
            <person name="de Pablos B."/>
            <person name="Perez-Diaz J.-C."/>
            <person name="Purcell R."/>
            <person name="Remmel B."/>
            <person name="Rose M."/>
            <person name="Schlueter T."/>
            <person name="Simoes N."/>
            <person name="Tierrez A."/>
            <person name="Vazquez-Boland J.-A."/>
            <person name="Voss H."/>
            <person name="Wehland J."/>
            <person name="Cossart P."/>
        </authorList>
    </citation>
    <scope>NUCLEOTIDE SEQUENCE [LARGE SCALE GENOMIC DNA]</scope>
    <source>
        <strain>ATCC BAA-680 / CLIP 11262</strain>
    </source>
</reference>
<gene>
    <name evidence="1" type="primary">panC</name>
    <name type="ordered locus">lin2015</name>
</gene>
<proteinExistence type="inferred from homology"/>
<evidence type="ECO:0000255" key="1">
    <source>
        <dbReference type="HAMAP-Rule" id="MF_00158"/>
    </source>
</evidence>
<dbReference type="EC" id="6.3.2.1" evidence="1"/>
<dbReference type="EMBL" id="AL596170">
    <property type="protein sequence ID" value="CAC97245.1"/>
    <property type="molecule type" value="Genomic_DNA"/>
</dbReference>
<dbReference type="PIR" id="AE1684">
    <property type="entry name" value="AE1684"/>
</dbReference>
<dbReference type="RefSeq" id="WP_003769403.1">
    <property type="nucleotide sequence ID" value="NC_003212.1"/>
</dbReference>
<dbReference type="SMR" id="Q92AA7"/>
<dbReference type="STRING" id="272626.gene:17566373"/>
<dbReference type="KEGG" id="lin:panC"/>
<dbReference type="eggNOG" id="COG0414">
    <property type="taxonomic scope" value="Bacteria"/>
</dbReference>
<dbReference type="HOGENOM" id="CLU_047148_0_0_9"/>
<dbReference type="OrthoDB" id="9773087at2"/>
<dbReference type="UniPathway" id="UPA00028">
    <property type="reaction ID" value="UER00005"/>
</dbReference>
<dbReference type="Proteomes" id="UP000002513">
    <property type="component" value="Chromosome"/>
</dbReference>
<dbReference type="GO" id="GO:0005829">
    <property type="term" value="C:cytosol"/>
    <property type="evidence" value="ECO:0007669"/>
    <property type="project" value="TreeGrafter"/>
</dbReference>
<dbReference type="GO" id="GO:0005524">
    <property type="term" value="F:ATP binding"/>
    <property type="evidence" value="ECO:0007669"/>
    <property type="project" value="UniProtKB-KW"/>
</dbReference>
<dbReference type="GO" id="GO:0004592">
    <property type="term" value="F:pantoate-beta-alanine ligase activity"/>
    <property type="evidence" value="ECO:0007669"/>
    <property type="project" value="UniProtKB-UniRule"/>
</dbReference>
<dbReference type="GO" id="GO:0015940">
    <property type="term" value="P:pantothenate biosynthetic process"/>
    <property type="evidence" value="ECO:0007669"/>
    <property type="project" value="UniProtKB-UniRule"/>
</dbReference>
<dbReference type="CDD" id="cd00560">
    <property type="entry name" value="PanC"/>
    <property type="match status" value="1"/>
</dbReference>
<dbReference type="FunFam" id="3.30.1300.10:FF:000001">
    <property type="entry name" value="Pantothenate synthetase"/>
    <property type="match status" value="1"/>
</dbReference>
<dbReference type="FunFam" id="3.40.50.620:FF:000013">
    <property type="entry name" value="Pantothenate synthetase"/>
    <property type="match status" value="1"/>
</dbReference>
<dbReference type="Gene3D" id="3.40.50.620">
    <property type="entry name" value="HUPs"/>
    <property type="match status" value="1"/>
</dbReference>
<dbReference type="Gene3D" id="3.30.1300.10">
    <property type="entry name" value="Pantoate-beta-alanine ligase, C-terminal domain"/>
    <property type="match status" value="1"/>
</dbReference>
<dbReference type="HAMAP" id="MF_00158">
    <property type="entry name" value="PanC"/>
    <property type="match status" value="1"/>
</dbReference>
<dbReference type="InterPro" id="IPR004821">
    <property type="entry name" value="Cyt_trans-like"/>
</dbReference>
<dbReference type="InterPro" id="IPR003721">
    <property type="entry name" value="Pantoate_ligase"/>
</dbReference>
<dbReference type="InterPro" id="IPR042176">
    <property type="entry name" value="Pantoate_ligase_C"/>
</dbReference>
<dbReference type="InterPro" id="IPR014729">
    <property type="entry name" value="Rossmann-like_a/b/a_fold"/>
</dbReference>
<dbReference type="NCBIfam" id="TIGR00125">
    <property type="entry name" value="cyt_tran_rel"/>
    <property type="match status" value="1"/>
</dbReference>
<dbReference type="NCBIfam" id="TIGR00018">
    <property type="entry name" value="panC"/>
    <property type="match status" value="1"/>
</dbReference>
<dbReference type="PANTHER" id="PTHR21299">
    <property type="entry name" value="CYTIDYLATE KINASE/PANTOATE-BETA-ALANINE LIGASE"/>
    <property type="match status" value="1"/>
</dbReference>
<dbReference type="PANTHER" id="PTHR21299:SF1">
    <property type="entry name" value="PANTOATE--BETA-ALANINE LIGASE"/>
    <property type="match status" value="1"/>
</dbReference>
<dbReference type="Pfam" id="PF02569">
    <property type="entry name" value="Pantoate_ligase"/>
    <property type="match status" value="1"/>
</dbReference>
<dbReference type="SUPFAM" id="SSF52374">
    <property type="entry name" value="Nucleotidylyl transferase"/>
    <property type="match status" value="1"/>
</dbReference>
<accession>Q92AA7</accession>
<organism>
    <name type="scientific">Listeria innocua serovar 6a (strain ATCC BAA-680 / CLIP 11262)</name>
    <dbReference type="NCBI Taxonomy" id="272626"/>
    <lineage>
        <taxon>Bacteria</taxon>
        <taxon>Bacillati</taxon>
        <taxon>Bacillota</taxon>
        <taxon>Bacilli</taxon>
        <taxon>Bacillales</taxon>
        <taxon>Listeriaceae</taxon>
        <taxon>Listeria</taxon>
    </lineage>
</organism>
<keyword id="KW-0067">ATP-binding</keyword>
<keyword id="KW-0963">Cytoplasm</keyword>
<keyword id="KW-0436">Ligase</keyword>
<keyword id="KW-0547">Nucleotide-binding</keyword>
<keyword id="KW-0566">Pantothenate biosynthesis</keyword>
<comment type="function">
    <text evidence="1">Catalyzes the condensation of pantoate with beta-alanine in an ATP-dependent reaction via a pantoyl-adenylate intermediate.</text>
</comment>
<comment type="catalytic activity">
    <reaction evidence="1">
        <text>(R)-pantoate + beta-alanine + ATP = (R)-pantothenate + AMP + diphosphate + H(+)</text>
        <dbReference type="Rhea" id="RHEA:10912"/>
        <dbReference type="ChEBI" id="CHEBI:15378"/>
        <dbReference type="ChEBI" id="CHEBI:15980"/>
        <dbReference type="ChEBI" id="CHEBI:29032"/>
        <dbReference type="ChEBI" id="CHEBI:30616"/>
        <dbReference type="ChEBI" id="CHEBI:33019"/>
        <dbReference type="ChEBI" id="CHEBI:57966"/>
        <dbReference type="ChEBI" id="CHEBI:456215"/>
        <dbReference type="EC" id="6.3.2.1"/>
    </reaction>
</comment>
<comment type="pathway">
    <text evidence="1">Cofactor biosynthesis; (R)-pantothenate biosynthesis; (R)-pantothenate from (R)-pantoate and beta-alanine: step 1/1.</text>
</comment>
<comment type="subunit">
    <text evidence="1">Homodimer.</text>
</comment>
<comment type="subcellular location">
    <subcellularLocation>
        <location evidence="1">Cytoplasm</location>
    </subcellularLocation>
</comment>
<comment type="miscellaneous">
    <text evidence="1">The reaction proceeds by a bi uni uni bi ping pong mechanism.</text>
</comment>
<comment type="similarity">
    <text evidence="1">Belongs to the pantothenate synthetase family.</text>
</comment>